<keyword id="KW-0002">3D-structure</keyword>
<keyword id="KW-0025">Alternative splicing</keyword>
<keyword id="KW-1015">Disulfide bond</keyword>
<keyword id="KW-0325">Glycoprotein</keyword>
<keyword id="KW-0326">Glycosidase</keyword>
<keyword id="KW-0378">Hydrolase</keyword>
<keyword id="KW-1185">Reference proteome</keyword>
<keyword id="KW-0964">Secreted</keyword>
<keyword id="KW-0732">Signal</keyword>
<protein>
    <recommendedName>
        <fullName evidence="10">Beta-glucosidase 12</fullName>
        <shortName evidence="9">Os4bglu12</shortName>
        <ecNumber evidence="6">3.2.1.21</ecNumber>
    </recommendedName>
</protein>
<comment type="function">
    <text evidence="6">Hydrolyzes p-nitrophenyl beta-D-glucoside, p-nitrophenyl beta-D-galactoside, p-nitrophenyl beta-D-xyloside, p-nitrophenyl beta-D-fucoside, p-nitrophenyl beta-L-arabinoside, cello-oligosaccharides and laminaribiose.</text>
</comment>
<comment type="catalytic activity">
    <reaction evidence="6">
        <text>Hydrolysis of terminal, non-reducing beta-D-glucosyl residues with release of beta-D-glucose.</text>
        <dbReference type="EC" id="3.2.1.21"/>
    </reaction>
</comment>
<comment type="biophysicochemical properties">
    <kinetics>
        <KM evidence="7">0.56 mM for p-nitrophenyl beta-D-glucopyranoside</KM>
        <KM evidence="7">1.64 mM for p-nitrophenyl beta-D-thioglucoside</KM>
        <KM evidence="7">0.91 mM for n-heptyl-beta-D-glucoside</KM>
        <KM evidence="7">0.44 mM for n-octyl-beta-D-glucoside</KM>
        <KM evidence="7">1.61 mM for n-octyl-beta-D-thioglucopyranoside</KM>
        <Vmax evidence="7">20.1 umol/min/mg enzyme with p-nitrophenyl beta-D-glucopyranoside as substrate</Vmax>
        <Vmax evidence="7">0.29 umol/min/mg enzyme with p-nitrophenyl beta-D-thioglucoside as substrate</Vmax>
        <Vmax evidence="7">13.2 umol/min/mg enzyme with n-heptyl-beta-D-glucoside as substrate</Vmax>
        <Vmax evidence="7">10.7 umol/min/mg enzyme with n-octyl-beta-D-glucoside as substrate</Vmax>
        <Vmax evidence="7">4.0 umol/min/mg enzyme with n-octyl-beta-D-thioglucopyranoside as substrate</Vmax>
        <text evidence="7">kcat is 18.5 sec(-1) with p-nitrophenyl beta-D-glucopyranoside as substrate. kcat is 0.27 sec(-1) with p-nitrophenyl beta-D-thioglucoside as substrate. kcat is 12.1 sec(-1) with n-heptyl-beta-D-glucoside as substrate. kcat is 9.8 sec(-1) with n-octyl-beta-D-glucoside as substrate. kcat is 0.038 sec(-1) n-octyl-beta-D-thioglucopyranoside as substrate.</text>
    </kinetics>
</comment>
<comment type="subcellular location">
    <subcellularLocation>
        <location evidence="10">Secreted</location>
    </subcellularLocation>
</comment>
<comment type="alternative products">
    <event type="alternative splicing"/>
    <isoform>
        <id>Q7XKV4-1</id>
        <name>1</name>
        <sequence type="displayed"/>
    </isoform>
    <isoform>
        <id>Q7XKV4-2</id>
        <name>2</name>
        <sequence type="described" ref="VSP_038503 VSP_038504"/>
    </isoform>
</comment>
<comment type="similarity">
    <text evidence="10">Belongs to the glycosyl hydrolase 1 family.</text>
</comment>
<comment type="sequence caution" evidence="10">
    <conflict type="erroneous gene model prediction">
        <sequence resource="EMBL-CDS" id="BAF14984"/>
    </conflict>
</comment>
<gene>
    <name evidence="10" type="primary">BGLU12</name>
    <name evidence="12" type="ordered locus">Os04g0474800</name>
    <name evidence="10" type="ordered locus">LOC_Os04g39880</name>
    <name evidence="14" type="ORF">OsJ_15166</name>
    <name evidence="13" type="ORF">OSJNBa0022H21.3</name>
</gene>
<reference key="1">
    <citation type="journal article" date="2002" name="Nature">
        <title>Sequence and analysis of rice chromosome 4.</title>
        <authorList>
            <person name="Feng Q."/>
            <person name="Zhang Y."/>
            <person name="Hao P."/>
            <person name="Wang S."/>
            <person name="Fu G."/>
            <person name="Huang Y."/>
            <person name="Li Y."/>
            <person name="Zhu J."/>
            <person name="Liu Y."/>
            <person name="Hu X."/>
            <person name="Jia P."/>
            <person name="Zhang Y."/>
            <person name="Zhao Q."/>
            <person name="Ying K."/>
            <person name="Yu S."/>
            <person name="Tang Y."/>
            <person name="Weng Q."/>
            <person name="Zhang L."/>
            <person name="Lu Y."/>
            <person name="Mu J."/>
            <person name="Lu Y."/>
            <person name="Zhang L.S."/>
            <person name="Yu Z."/>
            <person name="Fan D."/>
            <person name="Liu X."/>
            <person name="Lu T."/>
            <person name="Li C."/>
            <person name="Wu Y."/>
            <person name="Sun T."/>
            <person name="Lei H."/>
            <person name="Li T."/>
            <person name="Hu H."/>
            <person name="Guan J."/>
            <person name="Wu M."/>
            <person name="Zhang R."/>
            <person name="Zhou B."/>
            <person name="Chen Z."/>
            <person name="Chen L."/>
            <person name="Jin Z."/>
            <person name="Wang R."/>
            <person name="Yin H."/>
            <person name="Cai Z."/>
            <person name="Ren S."/>
            <person name="Lv G."/>
            <person name="Gu W."/>
            <person name="Zhu G."/>
            <person name="Tu Y."/>
            <person name="Jia J."/>
            <person name="Zhang Y."/>
            <person name="Chen J."/>
            <person name="Kang H."/>
            <person name="Chen X."/>
            <person name="Shao C."/>
            <person name="Sun Y."/>
            <person name="Hu Q."/>
            <person name="Zhang X."/>
            <person name="Zhang W."/>
            <person name="Wang L."/>
            <person name="Ding C."/>
            <person name="Sheng H."/>
            <person name="Gu J."/>
            <person name="Chen S."/>
            <person name="Ni L."/>
            <person name="Zhu F."/>
            <person name="Chen W."/>
            <person name="Lan L."/>
            <person name="Lai Y."/>
            <person name="Cheng Z."/>
            <person name="Gu M."/>
            <person name="Jiang J."/>
            <person name="Li J."/>
            <person name="Hong G."/>
            <person name="Xue Y."/>
            <person name="Han B."/>
        </authorList>
    </citation>
    <scope>NUCLEOTIDE SEQUENCE [LARGE SCALE GENOMIC DNA]</scope>
    <source>
        <strain>cv. Nipponbare</strain>
    </source>
</reference>
<reference key="2">
    <citation type="journal article" date="2005" name="Nature">
        <title>The map-based sequence of the rice genome.</title>
        <authorList>
            <consortium name="International rice genome sequencing project (IRGSP)"/>
        </authorList>
    </citation>
    <scope>NUCLEOTIDE SEQUENCE [LARGE SCALE GENOMIC DNA]</scope>
    <source>
        <strain>cv. Nipponbare</strain>
    </source>
</reference>
<reference key="3">
    <citation type="journal article" date="2008" name="Nucleic Acids Res.">
        <title>The rice annotation project database (RAP-DB): 2008 update.</title>
        <authorList>
            <consortium name="The rice annotation project (RAP)"/>
        </authorList>
    </citation>
    <scope>GENOME REANNOTATION</scope>
    <source>
        <strain>cv. Nipponbare</strain>
    </source>
</reference>
<reference key="4">
    <citation type="journal article" date="2013" name="Rice">
        <title>Improvement of the Oryza sativa Nipponbare reference genome using next generation sequence and optical map data.</title>
        <authorList>
            <person name="Kawahara Y."/>
            <person name="de la Bastide M."/>
            <person name="Hamilton J.P."/>
            <person name="Kanamori H."/>
            <person name="McCombie W.R."/>
            <person name="Ouyang S."/>
            <person name="Schwartz D.C."/>
            <person name="Tanaka T."/>
            <person name="Wu J."/>
            <person name="Zhou S."/>
            <person name="Childs K.L."/>
            <person name="Davidson R.M."/>
            <person name="Lin H."/>
            <person name="Quesada-Ocampo L."/>
            <person name="Vaillancourt B."/>
            <person name="Sakai H."/>
            <person name="Lee S.S."/>
            <person name="Kim J."/>
            <person name="Numa H."/>
            <person name="Itoh T."/>
            <person name="Buell C.R."/>
            <person name="Matsumoto T."/>
        </authorList>
    </citation>
    <scope>GENOME REANNOTATION</scope>
    <source>
        <strain>cv. Nipponbare</strain>
    </source>
</reference>
<reference key="5">
    <citation type="journal article" date="2005" name="PLoS Biol.">
        <title>The genomes of Oryza sativa: a history of duplications.</title>
        <authorList>
            <person name="Yu J."/>
            <person name="Wang J."/>
            <person name="Lin W."/>
            <person name="Li S."/>
            <person name="Li H."/>
            <person name="Zhou J."/>
            <person name="Ni P."/>
            <person name="Dong W."/>
            <person name="Hu S."/>
            <person name="Zeng C."/>
            <person name="Zhang J."/>
            <person name="Zhang Y."/>
            <person name="Li R."/>
            <person name="Xu Z."/>
            <person name="Li S."/>
            <person name="Li X."/>
            <person name="Zheng H."/>
            <person name="Cong L."/>
            <person name="Lin L."/>
            <person name="Yin J."/>
            <person name="Geng J."/>
            <person name="Li G."/>
            <person name="Shi J."/>
            <person name="Liu J."/>
            <person name="Lv H."/>
            <person name="Li J."/>
            <person name="Wang J."/>
            <person name="Deng Y."/>
            <person name="Ran L."/>
            <person name="Shi X."/>
            <person name="Wang X."/>
            <person name="Wu Q."/>
            <person name="Li C."/>
            <person name="Ren X."/>
            <person name="Wang J."/>
            <person name="Wang X."/>
            <person name="Li D."/>
            <person name="Liu D."/>
            <person name="Zhang X."/>
            <person name="Ji Z."/>
            <person name="Zhao W."/>
            <person name="Sun Y."/>
            <person name="Zhang Z."/>
            <person name="Bao J."/>
            <person name="Han Y."/>
            <person name="Dong L."/>
            <person name="Ji J."/>
            <person name="Chen P."/>
            <person name="Wu S."/>
            <person name="Liu J."/>
            <person name="Xiao Y."/>
            <person name="Bu D."/>
            <person name="Tan J."/>
            <person name="Yang L."/>
            <person name="Ye C."/>
            <person name="Zhang J."/>
            <person name="Xu J."/>
            <person name="Zhou Y."/>
            <person name="Yu Y."/>
            <person name="Zhang B."/>
            <person name="Zhuang S."/>
            <person name="Wei H."/>
            <person name="Liu B."/>
            <person name="Lei M."/>
            <person name="Yu H."/>
            <person name="Li Y."/>
            <person name="Xu H."/>
            <person name="Wei S."/>
            <person name="He X."/>
            <person name="Fang L."/>
            <person name="Zhang Z."/>
            <person name="Zhang Y."/>
            <person name="Huang X."/>
            <person name="Su Z."/>
            <person name="Tong W."/>
            <person name="Li J."/>
            <person name="Tong Z."/>
            <person name="Li S."/>
            <person name="Ye J."/>
            <person name="Wang L."/>
            <person name="Fang L."/>
            <person name="Lei T."/>
            <person name="Chen C.-S."/>
            <person name="Chen H.-C."/>
            <person name="Xu Z."/>
            <person name="Li H."/>
            <person name="Huang H."/>
            <person name="Zhang F."/>
            <person name="Xu H."/>
            <person name="Li N."/>
            <person name="Zhao C."/>
            <person name="Li S."/>
            <person name="Dong L."/>
            <person name="Huang Y."/>
            <person name="Li L."/>
            <person name="Xi Y."/>
            <person name="Qi Q."/>
            <person name="Li W."/>
            <person name="Zhang B."/>
            <person name="Hu W."/>
            <person name="Zhang Y."/>
            <person name="Tian X."/>
            <person name="Jiao Y."/>
            <person name="Liang X."/>
            <person name="Jin J."/>
            <person name="Gao L."/>
            <person name="Zheng W."/>
            <person name="Hao B."/>
            <person name="Liu S.-M."/>
            <person name="Wang W."/>
            <person name="Yuan L."/>
            <person name="Cao M."/>
            <person name="McDermott J."/>
            <person name="Samudrala R."/>
            <person name="Wang J."/>
            <person name="Wong G.K.-S."/>
            <person name="Yang H."/>
        </authorList>
    </citation>
    <scope>NUCLEOTIDE SEQUENCE [LARGE SCALE GENOMIC DNA]</scope>
    <source>
        <strain>cv. Nipponbare</strain>
    </source>
</reference>
<reference key="6">
    <citation type="journal article" date="2003" name="Science">
        <title>Collection, mapping, and annotation of over 28,000 cDNA clones from japonica rice.</title>
        <authorList>
            <consortium name="The rice full-length cDNA consortium"/>
        </authorList>
    </citation>
    <scope>NUCLEOTIDE SEQUENCE [LARGE SCALE MRNA] (ISOFORM 2)</scope>
    <source>
        <strain>cv. Nipponbare</strain>
    </source>
</reference>
<reference key="7">
    <citation type="journal article" date="2006" name="BMC Plant Biol.">
        <title>Analysis of rice glycosyl hydrolase family 1 and expression of Os4bglu12 beta-glucosidase.</title>
        <authorList>
            <person name="Opassiri R."/>
            <person name="Pomthong B."/>
            <person name="Onkoksoong T."/>
            <person name="Akiyama T."/>
            <person name="Esen A."/>
            <person name="Ketudat Cairns J.R."/>
        </authorList>
    </citation>
    <scope>FUNCTION</scope>
    <scope>CATALYTIC ACTIVITY</scope>
    <scope>GENE FAMILY</scope>
    <scope>NOMENCLATURE</scope>
</reference>
<reference key="8">
    <citation type="journal article" date="2012" name="Carbohydr. Res.">
        <title>Exchanging a single amino acid residue generates or weakens a +2 cellooligosaccharide binding subsite in rice beta-glucosidases.</title>
        <authorList>
            <person name="Sansenya S."/>
            <person name="Maneesan J."/>
            <person name="Cairns J.R."/>
        </authorList>
    </citation>
    <scope>MUTAGENESIS OF HIS-276</scope>
</reference>
<reference key="9">
    <citation type="journal article" date="2011" name="Arch. Biochem. Biophys.">
        <title>The crystal structure of rice (Oryza sativa L.) Os4BGlu12, an oligosaccharide and tuberonic acid glucoside-hydrolyzing beta-glucosidase with significant thioglucohydrolase activity.</title>
        <authorList>
            <person name="Sansenya S."/>
            <person name="Opassiri R."/>
            <person name="Kuaprasert B."/>
            <person name="Chen C.J."/>
            <person name="Cairns J.R."/>
        </authorList>
    </citation>
    <scope>X-RAY CRYSTALLOGRAPHY (2.40 ANGSTROMS) OF 25-510 IN COMPLEX WITH SUBSTRATE ANALOG</scope>
    <scope>ACTIVE SITE</scope>
    <scope>BIOPHYSICOCHEMICAL PROPERTIES</scope>
    <scope>DISULFIDE BONDS</scope>
</reference>
<accession>Q7XKV4</accession>
<accession>B7EQY4</accession>
<accession>Q0JCF3</accession>
<dbReference type="EC" id="3.2.1.21" evidence="6"/>
<dbReference type="EMBL" id="AL731582">
    <property type="protein sequence ID" value="CAE05483.2"/>
    <property type="molecule type" value="Genomic_DNA"/>
</dbReference>
<dbReference type="EMBL" id="AP008210">
    <property type="protein sequence ID" value="BAF14984.1"/>
    <property type="status" value="ALT_SEQ"/>
    <property type="molecule type" value="Genomic_DNA"/>
</dbReference>
<dbReference type="EMBL" id="AP014960">
    <property type="protein sequence ID" value="BAS89674.1"/>
    <property type="molecule type" value="Genomic_DNA"/>
</dbReference>
<dbReference type="EMBL" id="CM000141">
    <property type="protein sequence ID" value="EEE61179.1"/>
    <property type="molecule type" value="Genomic_DNA"/>
</dbReference>
<dbReference type="EMBL" id="AK100820">
    <property type="protein sequence ID" value="BAG94781.1"/>
    <property type="molecule type" value="mRNA"/>
</dbReference>
<dbReference type="RefSeq" id="XP_015636597.1">
    <property type="nucleotide sequence ID" value="XM_015781111.1"/>
</dbReference>
<dbReference type="PDB" id="3PTK">
    <property type="method" value="X-ray"/>
    <property type="resolution" value="2.49 A"/>
    <property type="chains" value="A/B=25-510"/>
</dbReference>
<dbReference type="PDB" id="3PTM">
    <property type="method" value="X-ray"/>
    <property type="resolution" value="2.40 A"/>
    <property type="chains" value="A/B=25-510"/>
</dbReference>
<dbReference type="PDB" id="3PTQ">
    <property type="method" value="X-ray"/>
    <property type="resolution" value="2.45 A"/>
    <property type="chains" value="A/B=25-510"/>
</dbReference>
<dbReference type="PDBsum" id="3PTK"/>
<dbReference type="PDBsum" id="3PTM"/>
<dbReference type="PDBsum" id="3PTQ"/>
<dbReference type="SMR" id="Q7XKV4"/>
<dbReference type="FunCoup" id="Q7XKV4">
    <property type="interactions" value="596"/>
</dbReference>
<dbReference type="STRING" id="39947.Q7XKV4"/>
<dbReference type="CAZy" id="GH1">
    <property type="family name" value="Glycoside Hydrolase Family 1"/>
</dbReference>
<dbReference type="GlyCosmos" id="Q7XKV4">
    <property type="glycosylation" value="5 sites, No reported glycans"/>
</dbReference>
<dbReference type="PaxDb" id="39947-Q7XKV4"/>
<dbReference type="EnsemblPlants" id="Os04t0474800-03">
    <molecule id="Q7XKV4-1"/>
    <property type="protein sequence ID" value="Os04t0474800-03"/>
    <property type="gene ID" value="Os04g0474800"/>
</dbReference>
<dbReference type="Gramene" id="Os04t0474800-03">
    <molecule id="Q7XKV4-1"/>
    <property type="protein sequence ID" value="Os04t0474800-03"/>
    <property type="gene ID" value="Os04g0474800"/>
</dbReference>
<dbReference type="KEGG" id="dosa:Os04g0474800"/>
<dbReference type="eggNOG" id="KOG0626">
    <property type="taxonomic scope" value="Eukaryota"/>
</dbReference>
<dbReference type="InParanoid" id="Q7XKV4"/>
<dbReference type="OMA" id="YLHLYYV"/>
<dbReference type="OrthoDB" id="65569at2759"/>
<dbReference type="Proteomes" id="UP000000763">
    <property type="component" value="Chromosome 4"/>
</dbReference>
<dbReference type="Proteomes" id="UP000007752">
    <property type="component" value="Chromosome 4"/>
</dbReference>
<dbReference type="Proteomes" id="UP000059680">
    <property type="component" value="Chromosome 4"/>
</dbReference>
<dbReference type="GO" id="GO:0005576">
    <property type="term" value="C:extracellular region"/>
    <property type="evidence" value="ECO:0007669"/>
    <property type="project" value="UniProtKB-SubCell"/>
</dbReference>
<dbReference type="GO" id="GO:0033907">
    <property type="term" value="F:beta-D-fucosidase activity"/>
    <property type="evidence" value="ECO:0000314"/>
    <property type="project" value="UniProtKB"/>
</dbReference>
<dbReference type="GO" id="GO:0004565">
    <property type="term" value="F:beta-galactosidase activity"/>
    <property type="evidence" value="ECO:0000314"/>
    <property type="project" value="UniProtKB"/>
</dbReference>
<dbReference type="GO" id="GO:0080083">
    <property type="term" value="F:beta-gentiobiose beta-glucosidase activity"/>
    <property type="evidence" value="ECO:0000314"/>
    <property type="project" value="UniProtKB"/>
</dbReference>
<dbReference type="GO" id="GO:0008422">
    <property type="term" value="F:beta-glucosidase activity"/>
    <property type="evidence" value="ECO:0000314"/>
    <property type="project" value="UniProtKB"/>
</dbReference>
<dbReference type="GO" id="GO:0047701">
    <property type="term" value="F:beta-L-arabinosidase activity"/>
    <property type="evidence" value="ECO:0000314"/>
    <property type="project" value="UniProtKB"/>
</dbReference>
<dbReference type="GO" id="GO:0004338">
    <property type="term" value="F:glucan exo-1,3-beta-glucosidase activity"/>
    <property type="evidence" value="ECO:0000314"/>
    <property type="project" value="UniProtKB"/>
</dbReference>
<dbReference type="GO" id="GO:0005975">
    <property type="term" value="P:carbohydrate metabolic process"/>
    <property type="evidence" value="ECO:0007669"/>
    <property type="project" value="InterPro"/>
</dbReference>
<dbReference type="FunFam" id="3.20.20.80:FF:000020">
    <property type="entry name" value="Beta-glucosidase 12"/>
    <property type="match status" value="1"/>
</dbReference>
<dbReference type="Gene3D" id="3.20.20.80">
    <property type="entry name" value="Glycosidases"/>
    <property type="match status" value="1"/>
</dbReference>
<dbReference type="InterPro" id="IPR001360">
    <property type="entry name" value="Glyco_hydro_1"/>
</dbReference>
<dbReference type="InterPro" id="IPR033132">
    <property type="entry name" value="Glyco_hydro_1_N_CS"/>
</dbReference>
<dbReference type="InterPro" id="IPR017853">
    <property type="entry name" value="Glycoside_hydrolase_SF"/>
</dbReference>
<dbReference type="PANTHER" id="PTHR10353:SF242">
    <property type="entry name" value="BETA-GLUCOSIDASE 12"/>
    <property type="match status" value="1"/>
</dbReference>
<dbReference type="PANTHER" id="PTHR10353">
    <property type="entry name" value="GLYCOSYL HYDROLASE"/>
    <property type="match status" value="1"/>
</dbReference>
<dbReference type="Pfam" id="PF00232">
    <property type="entry name" value="Glyco_hydro_1"/>
    <property type="match status" value="1"/>
</dbReference>
<dbReference type="PRINTS" id="PR00131">
    <property type="entry name" value="GLHYDRLASE1"/>
</dbReference>
<dbReference type="SUPFAM" id="SSF51445">
    <property type="entry name" value="(Trans)glycosidases"/>
    <property type="match status" value="1"/>
</dbReference>
<dbReference type="PROSITE" id="PS00653">
    <property type="entry name" value="GLYCOSYL_HYDROL_F1_2"/>
    <property type="match status" value="1"/>
</dbReference>
<organism>
    <name type="scientific">Oryza sativa subsp. japonica</name>
    <name type="common">Rice</name>
    <dbReference type="NCBI Taxonomy" id="39947"/>
    <lineage>
        <taxon>Eukaryota</taxon>
        <taxon>Viridiplantae</taxon>
        <taxon>Streptophyta</taxon>
        <taxon>Embryophyta</taxon>
        <taxon>Tracheophyta</taxon>
        <taxon>Spermatophyta</taxon>
        <taxon>Magnoliopsida</taxon>
        <taxon>Liliopsida</taxon>
        <taxon>Poales</taxon>
        <taxon>Poaceae</taxon>
        <taxon>BOP clade</taxon>
        <taxon>Oryzoideae</taxon>
        <taxon>Oryzeae</taxon>
        <taxon>Oryzinae</taxon>
        <taxon>Oryza</taxon>
        <taxon>Oryza sativa</taxon>
    </lineage>
</organism>
<proteinExistence type="evidence at protein level"/>
<sequence length="510" mass="57464">MAAAGAMPGGLLLTFLLLAVVASGAYNGAGEPPVSRRSFPKGFIFGTASSSYQYEGGAAEGGRGPSIWDTFTHQHPEKIADRSNGDVASDSYHLYKEDVRLMKDMGMDAYRFSISWTRILPNGSLRGGVNKEGIKYYNNLINELLSKGVQPFITLFHWDSPQALEDKYNGFLSPNIINDFKDYAEICFKEFGDRVKNWITFNEPWTFCSNGYATGLFAPGRCSPWEKGNCSVGDSGREPYTACHHQLLAHAETVRLYKAKYQALQKGKIGITLVSHWFVPFSRSKSNDDAAKRAIDFMFGWFMDPLIRGDYPLSMRGLVGNRLPQFTKEQSKLVKGAFDFIGLNYYTANYADNLPPSNGLNNSYTTDSRANLTGVRNGIPIGPQAASPWLYVYPQGFRDLLLYVKENYGNPTVYITENGVDEFNNKTLPLQEALKDDARIEYYHKHLLSLLSAIRDGANVKGYFAWSLLDNFEWSNGYTVRFGINFVDYNDGRKRYPKNSAHWFKKFLLK</sequence>
<feature type="signal peptide" evidence="4">
    <location>
        <begin position="1"/>
        <end position="24"/>
    </location>
</feature>
<feature type="chain" id="PRO_0000390329" description="Beta-glucosidase 12" evidence="4">
    <location>
        <begin position="25"/>
        <end position="510"/>
    </location>
</feature>
<feature type="active site" description="Proton donor" evidence="7">
    <location>
        <position position="203"/>
    </location>
</feature>
<feature type="active site" description="Nucleophile" evidence="7">
    <location>
        <position position="417"/>
    </location>
</feature>
<feature type="binding site" evidence="11 17">
    <location>
        <position position="53"/>
    </location>
    <ligand>
        <name>a beta-D-glucoside</name>
        <dbReference type="ChEBI" id="CHEBI:22798"/>
    </ligand>
</feature>
<feature type="binding site" evidence="11 17">
    <location>
        <position position="157"/>
    </location>
    <ligand>
        <name>a beta-D-glucoside</name>
        <dbReference type="ChEBI" id="CHEBI:22798"/>
    </ligand>
</feature>
<feature type="binding site" evidence="11 16">
    <location>
        <begin position="202"/>
        <end position="203"/>
    </location>
    <ligand>
        <name>a beta-D-glucoside</name>
        <dbReference type="ChEBI" id="CHEBI:22798"/>
    </ligand>
</feature>
<feature type="binding site" evidence="11 17">
    <location>
        <position position="346"/>
    </location>
    <ligand>
        <name>a beta-D-glucoside</name>
        <dbReference type="ChEBI" id="CHEBI:22798"/>
    </ligand>
</feature>
<feature type="binding site" evidence="3">
    <location>
        <position position="417"/>
    </location>
    <ligand>
        <name>a beta-D-glucoside</name>
        <dbReference type="ChEBI" id="CHEBI:22798"/>
    </ligand>
</feature>
<feature type="binding site" evidence="2">
    <location>
        <position position="466"/>
    </location>
    <ligand>
        <name>a beta-D-glucoside</name>
        <dbReference type="ChEBI" id="CHEBI:22798"/>
    </ligand>
</feature>
<feature type="binding site" evidence="11 17">
    <location>
        <begin position="473"/>
        <end position="474"/>
    </location>
    <ligand>
        <name>a beta-D-glucoside</name>
        <dbReference type="ChEBI" id="CHEBI:22798"/>
    </ligand>
</feature>
<feature type="binding site" evidence="1">
    <location>
        <position position="482"/>
    </location>
    <ligand>
        <name>a beta-D-glucoside</name>
        <dbReference type="ChEBI" id="CHEBI:22798"/>
    </ligand>
</feature>
<feature type="glycosylation site" description="N-linked (GlcNAc...) asparagine" evidence="5">
    <location>
        <position position="122"/>
    </location>
</feature>
<feature type="glycosylation site" description="N-linked (GlcNAc...) asparagine" evidence="5">
    <location>
        <position position="229"/>
    </location>
</feature>
<feature type="glycosylation site" description="N-linked (GlcNAc...) asparagine" evidence="5">
    <location>
        <position position="361"/>
    </location>
</feature>
<feature type="glycosylation site" description="N-linked (GlcNAc...) asparagine" evidence="5">
    <location>
        <position position="371"/>
    </location>
</feature>
<feature type="glycosylation site" description="N-linked (GlcNAc...) asparagine" evidence="5">
    <location>
        <position position="425"/>
    </location>
</feature>
<feature type="disulfide bond" evidence="7 15 16 17">
    <location>
        <begin position="208"/>
        <end position="243"/>
    </location>
</feature>
<feature type="disulfide bond" evidence="7 15 16 17">
    <location>
        <begin position="222"/>
        <end position="230"/>
    </location>
</feature>
<feature type="splice variant" id="VSP_038503" description="In isoform 2." evidence="8">
    <location>
        <begin position="1"/>
        <end position="119"/>
    </location>
</feature>
<feature type="splice variant" id="VSP_038504" description="In isoform 2." evidence="8">
    <original>LPN</original>
    <variation>MAD</variation>
    <location>
        <begin position="120"/>
        <end position="122"/>
    </location>
</feature>
<feature type="mutagenesis site" description="Decreases the kcat/Km values 2 to 6-fold depending on the substrate." evidence="7">
    <original>H</original>
    <variation>M</variation>
    <location>
        <position position="276"/>
    </location>
</feature>
<evidence type="ECO:0000250" key="1">
    <source>
        <dbReference type="UniProtKB" id="Q1XH05"/>
    </source>
</evidence>
<evidence type="ECO:0000250" key="2">
    <source>
        <dbReference type="UniProtKB" id="Q75I93"/>
    </source>
</evidence>
<evidence type="ECO:0000250" key="3">
    <source>
        <dbReference type="UniProtKB" id="Q9SPP9"/>
    </source>
</evidence>
<evidence type="ECO:0000255" key="4"/>
<evidence type="ECO:0000255" key="5">
    <source>
        <dbReference type="PROSITE-ProRule" id="PRU00498"/>
    </source>
</evidence>
<evidence type="ECO:0000269" key="6">
    <source>
    </source>
</evidence>
<evidence type="ECO:0000269" key="7">
    <source>
    </source>
</evidence>
<evidence type="ECO:0000303" key="8">
    <source>
    </source>
</evidence>
<evidence type="ECO:0000303" key="9">
    <source>
    </source>
</evidence>
<evidence type="ECO:0000305" key="10"/>
<evidence type="ECO:0000305" key="11">
    <source>
    </source>
</evidence>
<evidence type="ECO:0000312" key="12">
    <source>
        <dbReference type="EMBL" id="BAF14984.1"/>
    </source>
</evidence>
<evidence type="ECO:0000312" key="13">
    <source>
        <dbReference type="EMBL" id="CAE05483.2"/>
    </source>
</evidence>
<evidence type="ECO:0000312" key="14">
    <source>
        <dbReference type="EMBL" id="EEE61179.1"/>
    </source>
</evidence>
<evidence type="ECO:0007744" key="15">
    <source>
        <dbReference type="PDB" id="3PTK"/>
    </source>
</evidence>
<evidence type="ECO:0007744" key="16">
    <source>
        <dbReference type="PDB" id="3PTM"/>
    </source>
</evidence>
<evidence type="ECO:0007744" key="17">
    <source>
        <dbReference type="PDB" id="3PTQ"/>
    </source>
</evidence>
<name>BGL12_ORYSJ</name>